<name>RL22_STRP6</name>
<organism>
    <name type="scientific">Streptococcus pyogenes serotype M6 (strain ATCC BAA-946 / MGAS10394)</name>
    <dbReference type="NCBI Taxonomy" id="286636"/>
    <lineage>
        <taxon>Bacteria</taxon>
        <taxon>Bacillati</taxon>
        <taxon>Bacillota</taxon>
        <taxon>Bacilli</taxon>
        <taxon>Lactobacillales</taxon>
        <taxon>Streptococcaceae</taxon>
        <taxon>Streptococcus</taxon>
    </lineage>
</organism>
<sequence>MAEISSAKAMARTVRVSPRKTRLVLDLIRGKKVADAIAILKFTPNKAARVIEKTLNSAIANAENNFGLEKANLVVSETFANEGPTMKRFRPRAKGSASPINKRTTHVTVVVSEK</sequence>
<comment type="function">
    <text evidence="1">This protein binds specifically to 23S rRNA; its binding is stimulated by other ribosomal proteins, e.g. L4, L17, and L20. It is important during the early stages of 50S assembly. It makes multiple contacts with different domains of the 23S rRNA in the assembled 50S subunit and ribosome (By similarity).</text>
</comment>
<comment type="function">
    <text evidence="1">The globular domain of the protein is located near the polypeptide exit tunnel on the outside of the subunit, while an extended beta-hairpin is found that lines the wall of the exit tunnel in the center of the 70S ribosome.</text>
</comment>
<comment type="subunit">
    <text evidence="1">Part of the 50S ribosomal subunit.</text>
</comment>
<comment type="similarity">
    <text evidence="1">Belongs to the universal ribosomal protein uL22 family.</text>
</comment>
<accession>Q5XED0</accession>
<keyword id="KW-0687">Ribonucleoprotein</keyword>
<keyword id="KW-0689">Ribosomal protein</keyword>
<keyword id="KW-0694">RNA-binding</keyword>
<keyword id="KW-0699">rRNA-binding</keyword>
<evidence type="ECO:0000255" key="1">
    <source>
        <dbReference type="HAMAP-Rule" id="MF_01331"/>
    </source>
</evidence>
<evidence type="ECO:0000305" key="2"/>
<gene>
    <name evidence="1" type="primary">rplV</name>
    <name type="ordered locus">M6_Spy0098</name>
</gene>
<feature type="chain" id="PRO_0000125241" description="Large ribosomal subunit protein uL22">
    <location>
        <begin position="1"/>
        <end position="114"/>
    </location>
</feature>
<proteinExistence type="inferred from homology"/>
<dbReference type="EMBL" id="CP000003">
    <property type="protein sequence ID" value="AAT86233.1"/>
    <property type="molecule type" value="Genomic_DNA"/>
</dbReference>
<dbReference type="RefSeq" id="WP_011184076.1">
    <property type="nucleotide sequence ID" value="NC_006086.1"/>
</dbReference>
<dbReference type="SMR" id="Q5XED0"/>
<dbReference type="KEGG" id="spa:M6_Spy0098"/>
<dbReference type="HOGENOM" id="CLU_083987_3_3_9"/>
<dbReference type="Proteomes" id="UP000001167">
    <property type="component" value="Chromosome"/>
</dbReference>
<dbReference type="GO" id="GO:0022625">
    <property type="term" value="C:cytosolic large ribosomal subunit"/>
    <property type="evidence" value="ECO:0007669"/>
    <property type="project" value="TreeGrafter"/>
</dbReference>
<dbReference type="GO" id="GO:0019843">
    <property type="term" value="F:rRNA binding"/>
    <property type="evidence" value="ECO:0007669"/>
    <property type="project" value="UniProtKB-UniRule"/>
</dbReference>
<dbReference type="GO" id="GO:0003735">
    <property type="term" value="F:structural constituent of ribosome"/>
    <property type="evidence" value="ECO:0007669"/>
    <property type="project" value="InterPro"/>
</dbReference>
<dbReference type="GO" id="GO:0006412">
    <property type="term" value="P:translation"/>
    <property type="evidence" value="ECO:0007669"/>
    <property type="project" value="UniProtKB-UniRule"/>
</dbReference>
<dbReference type="CDD" id="cd00336">
    <property type="entry name" value="Ribosomal_L22"/>
    <property type="match status" value="1"/>
</dbReference>
<dbReference type="FunFam" id="3.90.470.10:FF:000001">
    <property type="entry name" value="50S ribosomal protein L22"/>
    <property type="match status" value="1"/>
</dbReference>
<dbReference type="Gene3D" id="3.90.470.10">
    <property type="entry name" value="Ribosomal protein L22/L17"/>
    <property type="match status" value="1"/>
</dbReference>
<dbReference type="HAMAP" id="MF_01331_B">
    <property type="entry name" value="Ribosomal_uL22_B"/>
    <property type="match status" value="1"/>
</dbReference>
<dbReference type="InterPro" id="IPR001063">
    <property type="entry name" value="Ribosomal_uL22"/>
</dbReference>
<dbReference type="InterPro" id="IPR005727">
    <property type="entry name" value="Ribosomal_uL22_bac/chlpt-type"/>
</dbReference>
<dbReference type="InterPro" id="IPR047867">
    <property type="entry name" value="Ribosomal_uL22_bac/org-type"/>
</dbReference>
<dbReference type="InterPro" id="IPR018260">
    <property type="entry name" value="Ribosomal_uL22_CS"/>
</dbReference>
<dbReference type="InterPro" id="IPR036394">
    <property type="entry name" value="Ribosomal_uL22_sf"/>
</dbReference>
<dbReference type="NCBIfam" id="TIGR01044">
    <property type="entry name" value="rplV_bact"/>
    <property type="match status" value="1"/>
</dbReference>
<dbReference type="PANTHER" id="PTHR13501">
    <property type="entry name" value="CHLOROPLAST 50S RIBOSOMAL PROTEIN L22-RELATED"/>
    <property type="match status" value="1"/>
</dbReference>
<dbReference type="PANTHER" id="PTHR13501:SF8">
    <property type="entry name" value="LARGE RIBOSOMAL SUBUNIT PROTEIN UL22M"/>
    <property type="match status" value="1"/>
</dbReference>
<dbReference type="Pfam" id="PF00237">
    <property type="entry name" value="Ribosomal_L22"/>
    <property type="match status" value="1"/>
</dbReference>
<dbReference type="SUPFAM" id="SSF54843">
    <property type="entry name" value="Ribosomal protein L22"/>
    <property type="match status" value="1"/>
</dbReference>
<dbReference type="PROSITE" id="PS00464">
    <property type="entry name" value="RIBOSOMAL_L22"/>
    <property type="match status" value="1"/>
</dbReference>
<reference key="1">
    <citation type="journal article" date="2004" name="J. Infect. Dis.">
        <title>Progress toward characterization of the group A Streptococcus metagenome: complete genome sequence of a macrolide-resistant serotype M6 strain.</title>
        <authorList>
            <person name="Banks D.J."/>
            <person name="Porcella S.F."/>
            <person name="Barbian K.D."/>
            <person name="Beres S.B."/>
            <person name="Philips L.E."/>
            <person name="Voyich J.M."/>
            <person name="DeLeo F.R."/>
            <person name="Martin J.M."/>
            <person name="Somerville G.A."/>
            <person name="Musser J.M."/>
        </authorList>
    </citation>
    <scope>NUCLEOTIDE SEQUENCE [LARGE SCALE GENOMIC DNA]</scope>
    <source>
        <strain>ATCC BAA-946 / MGAS10394</strain>
    </source>
</reference>
<protein>
    <recommendedName>
        <fullName evidence="1">Large ribosomal subunit protein uL22</fullName>
    </recommendedName>
    <alternativeName>
        <fullName evidence="2">50S ribosomal protein L22</fullName>
    </alternativeName>
</protein>